<comment type="function">
    <text evidence="1">RuBisCO catalyzes two reactions: the carboxylation of D-ribulose 1,5-bisphosphate, the primary event in carbon dioxide fixation, as well as the oxidative fragmentation of the pentose substrate in the photorespiration process. Both reactions occur simultaneously and in competition at the same active site.</text>
</comment>
<comment type="catalytic activity">
    <reaction evidence="1">
        <text>2 (2R)-3-phosphoglycerate + 2 H(+) = D-ribulose 1,5-bisphosphate + CO2 + H2O</text>
        <dbReference type="Rhea" id="RHEA:23124"/>
        <dbReference type="ChEBI" id="CHEBI:15377"/>
        <dbReference type="ChEBI" id="CHEBI:15378"/>
        <dbReference type="ChEBI" id="CHEBI:16526"/>
        <dbReference type="ChEBI" id="CHEBI:57870"/>
        <dbReference type="ChEBI" id="CHEBI:58272"/>
        <dbReference type="EC" id="4.1.1.39"/>
    </reaction>
</comment>
<comment type="catalytic activity">
    <reaction evidence="1">
        <text>D-ribulose 1,5-bisphosphate + O2 = 2-phosphoglycolate + (2R)-3-phosphoglycerate + 2 H(+)</text>
        <dbReference type="Rhea" id="RHEA:36631"/>
        <dbReference type="ChEBI" id="CHEBI:15378"/>
        <dbReference type="ChEBI" id="CHEBI:15379"/>
        <dbReference type="ChEBI" id="CHEBI:57870"/>
        <dbReference type="ChEBI" id="CHEBI:58033"/>
        <dbReference type="ChEBI" id="CHEBI:58272"/>
    </reaction>
</comment>
<comment type="cofactor">
    <cofactor evidence="1">
        <name>Mg(2+)</name>
        <dbReference type="ChEBI" id="CHEBI:18420"/>
    </cofactor>
    <text evidence="1">Binds 1 Mg(2+) ion per subunit.</text>
</comment>
<comment type="subunit">
    <text evidence="1">Heterohexadecamer of 8 large chains and 8 small chains; disulfide-linked. The disulfide link is formed within the large subunit homodimers.</text>
</comment>
<comment type="subcellular location">
    <subcellularLocation>
        <location>Plastid</location>
        <location>Chloroplast</location>
    </subcellularLocation>
</comment>
<comment type="PTM">
    <text evidence="1">The disulfide bond which can form in the large chain dimeric partners within the hexadecamer appears to be associated with oxidative stress and protein turnover.</text>
</comment>
<comment type="miscellaneous">
    <text evidence="1">The basic functional RuBisCO is composed of a large chain homodimer in a 'head-to-tail' conformation. In form I RuBisCO this homodimer is arranged in a barrel-like tetramer with the small subunits forming a tetrameric 'cap' on each end of the 'barrel'.</text>
</comment>
<comment type="similarity">
    <text evidence="1">Belongs to the RuBisCO large chain family. Type I subfamily.</text>
</comment>
<geneLocation type="chloroplast"/>
<evidence type="ECO:0000255" key="1">
    <source>
        <dbReference type="HAMAP-Rule" id="MF_01338"/>
    </source>
</evidence>
<organism>
    <name type="scientific">Abies veitchii</name>
    <name type="common">Veitch fir</name>
    <dbReference type="NCBI Taxonomy" id="78262"/>
    <lineage>
        <taxon>Eukaryota</taxon>
        <taxon>Viridiplantae</taxon>
        <taxon>Streptophyta</taxon>
        <taxon>Embryophyta</taxon>
        <taxon>Tracheophyta</taxon>
        <taxon>Spermatophyta</taxon>
        <taxon>Pinopsida</taxon>
        <taxon>Pinidae</taxon>
        <taxon>Conifers I</taxon>
        <taxon>Pinales</taxon>
        <taxon>Pinaceae</taxon>
        <taxon>Abies</taxon>
    </lineage>
</organism>
<name>RBL_ABIVE</name>
<protein>
    <recommendedName>
        <fullName evidence="1">Ribulose bisphosphate carboxylase large chain</fullName>
        <shortName evidence="1">RuBisCO large subunit</shortName>
        <ecNumber evidence="1">4.1.1.39</ecNumber>
    </recommendedName>
</protein>
<gene>
    <name evidence="1" type="primary">rbcL</name>
</gene>
<reference key="1">
    <citation type="journal article" date="1998" name="Evolution">
        <title>Differentiation of mitochondrial DNA polymorphisms in populations of five Japanese Abies species.</title>
        <authorList>
            <person name="Tsumura Y."/>
            <person name="Suyama Y."/>
        </authorList>
        <dbReference type="AGRICOLA" id="IND21806043"/>
    </citation>
    <scope>NUCLEOTIDE SEQUENCE [GENOMIC DNA]</scope>
</reference>
<feature type="chain" id="PRO_0000062335" description="Ribulose bisphosphate carboxylase large chain">
    <location>
        <begin position="1" status="less than"/>
        <end position="443" status="greater than"/>
    </location>
</feature>
<feature type="active site" description="Proton acceptor" evidence="1">
    <location>
        <position position="168"/>
    </location>
</feature>
<feature type="active site" description="Proton acceptor" evidence="1">
    <location>
        <position position="287"/>
    </location>
</feature>
<feature type="binding site" description="in homodimeric partner" evidence="1">
    <location>
        <position position="116"/>
    </location>
    <ligand>
        <name>substrate</name>
    </ligand>
</feature>
<feature type="binding site" evidence="1">
    <location>
        <position position="166"/>
    </location>
    <ligand>
        <name>substrate</name>
    </ligand>
</feature>
<feature type="binding site" evidence="1">
    <location>
        <position position="170"/>
    </location>
    <ligand>
        <name>substrate</name>
    </ligand>
</feature>
<feature type="binding site" description="via carbamate group" evidence="1">
    <location>
        <position position="194"/>
    </location>
    <ligand>
        <name>Mg(2+)</name>
        <dbReference type="ChEBI" id="CHEBI:18420"/>
    </ligand>
</feature>
<feature type="binding site" evidence="1">
    <location>
        <position position="196"/>
    </location>
    <ligand>
        <name>Mg(2+)</name>
        <dbReference type="ChEBI" id="CHEBI:18420"/>
    </ligand>
</feature>
<feature type="binding site" evidence="1">
    <location>
        <position position="197"/>
    </location>
    <ligand>
        <name>Mg(2+)</name>
        <dbReference type="ChEBI" id="CHEBI:18420"/>
    </ligand>
</feature>
<feature type="binding site" evidence="1">
    <location>
        <position position="288"/>
    </location>
    <ligand>
        <name>substrate</name>
    </ligand>
</feature>
<feature type="binding site" evidence="1">
    <location>
        <position position="320"/>
    </location>
    <ligand>
        <name>substrate</name>
    </ligand>
</feature>
<feature type="binding site" evidence="1">
    <location>
        <position position="372"/>
    </location>
    <ligand>
        <name>substrate</name>
    </ligand>
</feature>
<feature type="site" description="Transition state stabilizer" evidence="1">
    <location>
        <position position="327"/>
    </location>
</feature>
<feature type="modified residue" description="N6,N6,N6-trimethyllysine" evidence="1">
    <location>
        <position position="7"/>
    </location>
</feature>
<feature type="modified residue" description="N6-carboxylysine" evidence="1">
    <location>
        <position position="194"/>
    </location>
</feature>
<feature type="disulfide bond" description="Interchain; in linked form" evidence="1">
    <location>
        <position position="240"/>
    </location>
</feature>
<feature type="non-terminal residue">
    <location>
        <position position="1"/>
    </location>
</feature>
<feature type="non-terminal residue">
    <location>
        <position position="443"/>
    </location>
</feature>
<keyword id="KW-0113">Calvin cycle</keyword>
<keyword id="KW-0120">Carbon dioxide fixation</keyword>
<keyword id="KW-0150">Chloroplast</keyword>
<keyword id="KW-1015">Disulfide bond</keyword>
<keyword id="KW-0456">Lyase</keyword>
<keyword id="KW-0460">Magnesium</keyword>
<keyword id="KW-0479">Metal-binding</keyword>
<keyword id="KW-0488">Methylation</keyword>
<keyword id="KW-0503">Monooxygenase</keyword>
<keyword id="KW-0560">Oxidoreductase</keyword>
<keyword id="KW-0601">Photorespiration</keyword>
<keyword id="KW-0602">Photosynthesis</keyword>
<keyword id="KW-0934">Plastid</keyword>
<sequence length="443" mass="48906">KASVGFKAGVKDYRLTYYTPEYQTKDTDILAAFRVTPQPGVPPEEAGAAVAAESSTGTWTTVWTDGLTSLDRYKGRCYDIEPVAGEESQFIAYVAYPLDLFEEGSVTNLFTSIVGNVFGFKALRALRLEDLRIPPAYSKTFQGPPHGIQVERDKLNKYGRPLLGCTIKPKLGLSAKNYGRAVYECLRGGLDFTKDDENVNSQPFMRWRDRFVFCAEAINKAQAETGEIKGHYLNATAGTCEEMMKRAIFARELGVPIVMHDYLTGGFTANTSLAHYCRDNGLLLHIHRAMHAVIDRQRNHGMHFRVLAKALRMSGGDHVHAGTVVGKLEGERDVTLGFVDLLRDDFIEKDRSRGIYFTQDWVSMPGVLPVASGGIHVWHMPALTEIFGDDSVLQFGGGTLGHPWGNAPGAVANRVAVEACVQARNEGRDLAREGNEVIREACK</sequence>
<proteinExistence type="inferred from homology"/>
<dbReference type="EC" id="4.1.1.39" evidence="1"/>
<dbReference type="EMBL" id="AB015649">
    <property type="protein sequence ID" value="BAA31206.1"/>
    <property type="molecule type" value="Genomic_DNA"/>
</dbReference>
<dbReference type="SMR" id="O78260"/>
<dbReference type="GO" id="GO:0009507">
    <property type="term" value="C:chloroplast"/>
    <property type="evidence" value="ECO:0007669"/>
    <property type="project" value="UniProtKB-SubCell"/>
</dbReference>
<dbReference type="GO" id="GO:0000287">
    <property type="term" value="F:magnesium ion binding"/>
    <property type="evidence" value="ECO:0007669"/>
    <property type="project" value="InterPro"/>
</dbReference>
<dbReference type="GO" id="GO:0004497">
    <property type="term" value="F:monooxygenase activity"/>
    <property type="evidence" value="ECO:0007669"/>
    <property type="project" value="UniProtKB-KW"/>
</dbReference>
<dbReference type="GO" id="GO:0016984">
    <property type="term" value="F:ribulose-bisphosphate carboxylase activity"/>
    <property type="evidence" value="ECO:0007669"/>
    <property type="project" value="UniProtKB-EC"/>
</dbReference>
<dbReference type="GO" id="GO:0009853">
    <property type="term" value="P:photorespiration"/>
    <property type="evidence" value="ECO:0007669"/>
    <property type="project" value="UniProtKB-KW"/>
</dbReference>
<dbReference type="GO" id="GO:0019253">
    <property type="term" value="P:reductive pentose-phosphate cycle"/>
    <property type="evidence" value="ECO:0007669"/>
    <property type="project" value="UniProtKB-KW"/>
</dbReference>
<dbReference type="CDD" id="cd08212">
    <property type="entry name" value="RuBisCO_large_I"/>
    <property type="match status" value="1"/>
</dbReference>
<dbReference type="FunFam" id="3.20.20.110:FF:000003">
    <property type="entry name" value="Ribulose bisphosphate carboxylase large chain"/>
    <property type="match status" value="1"/>
</dbReference>
<dbReference type="FunFam" id="3.30.70.150:FF:000001">
    <property type="entry name" value="Ribulose bisphosphate carboxylase large chain"/>
    <property type="match status" value="1"/>
</dbReference>
<dbReference type="Gene3D" id="3.20.20.110">
    <property type="entry name" value="Ribulose bisphosphate carboxylase, large subunit, C-terminal domain"/>
    <property type="match status" value="1"/>
</dbReference>
<dbReference type="Gene3D" id="3.30.70.150">
    <property type="entry name" value="RuBisCO large subunit, N-terminal domain"/>
    <property type="match status" value="1"/>
</dbReference>
<dbReference type="HAMAP" id="MF_01338">
    <property type="entry name" value="RuBisCO_L_type1"/>
    <property type="match status" value="1"/>
</dbReference>
<dbReference type="InterPro" id="IPR033966">
    <property type="entry name" value="RuBisCO"/>
</dbReference>
<dbReference type="InterPro" id="IPR020878">
    <property type="entry name" value="RuBisCo_large_chain_AS"/>
</dbReference>
<dbReference type="InterPro" id="IPR000685">
    <property type="entry name" value="RuBisCO_lsu_C"/>
</dbReference>
<dbReference type="InterPro" id="IPR036376">
    <property type="entry name" value="RuBisCO_lsu_C_sf"/>
</dbReference>
<dbReference type="InterPro" id="IPR017443">
    <property type="entry name" value="RuBisCO_lsu_fd_N"/>
</dbReference>
<dbReference type="InterPro" id="IPR036422">
    <property type="entry name" value="RuBisCO_lsu_N_sf"/>
</dbReference>
<dbReference type="InterPro" id="IPR020888">
    <property type="entry name" value="RuBisCO_lsuI"/>
</dbReference>
<dbReference type="NCBIfam" id="NF003252">
    <property type="entry name" value="PRK04208.1"/>
    <property type="match status" value="1"/>
</dbReference>
<dbReference type="PANTHER" id="PTHR42704">
    <property type="entry name" value="RIBULOSE BISPHOSPHATE CARBOXYLASE"/>
    <property type="match status" value="1"/>
</dbReference>
<dbReference type="PANTHER" id="PTHR42704:SF15">
    <property type="entry name" value="RIBULOSE BISPHOSPHATE CARBOXYLASE LARGE CHAIN"/>
    <property type="match status" value="1"/>
</dbReference>
<dbReference type="Pfam" id="PF00016">
    <property type="entry name" value="RuBisCO_large"/>
    <property type="match status" value="1"/>
</dbReference>
<dbReference type="Pfam" id="PF02788">
    <property type="entry name" value="RuBisCO_large_N"/>
    <property type="match status" value="1"/>
</dbReference>
<dbReference type="SFLD" id="SFLDG01052">
    <property type="entry name" value="RuBisCO"/>
    <property type="match status" value="1"/>
</dbReference>
<dbReference type="SFLD" id="SFLDS00014">
    <property type="entry name" value="RuBisCO"/>
    <property type="match status" value="1"/>
</dbReference>
<dbReference type="SFLD" id="SFLDG00301">
    <property type="entry name" value="RuBisCO-like_proteins"/>
    <property type="match status" value="1"/>
</dbReference>
<dbReference type="SUPFAM" id="SSF51649">
    <property type="entry name" value="RuBisCo, C-terminal domain"/>
    <property type="match status" value="1"/>
</dbReference>
<dbReference type="SUPFAM" id="SSF54966">
    <property type="entry name" value="RuBisCO, large subunit, small (N-terminal) domain"/>
    <property type="match status" value="1"/>
</dbReference>
<dbReference type="PROSITE" id="PS00157">
    <property type="entry name" value="RUBISCO_LARGE"/>
    <property type="match status" value="1"/>
</dbReference>
<accession>O78260</accession>